<reference key="1">
    <citation type="journal article" date="2002" name="Proc. Natl. Acad. Sci. U.S.A.">
        <title>The complete genome of hyperthermophile Methanopyrus kandleri AV19 and monophyly of archaeal methanogens.</title>
        <authorList>
            <person name="Slesarev A.I."/>
            <person name="Mezhevaya K.V."/>
            <person name="Makarova K.S."/>
            <person name="Polushin N.N."/>
            <person name="Shcherbinina O.V."/>
            <person name="Shakhova V.V."/>
            <person name="Belova G.I."/>
            <person name="Aravind L."/>
            <person name="Natale D.A."/>
            <person name="Rogozin I.B."/>
            <person name="Tatusov R.L."/>
            <person name="Wolf Y.I."/>
            <person name="Stetter K.O."/>
            <person name="Malykh A.G."/>
            <person name="Koonin E.V."/>
            <person name="Kozyavkin S.A."/>
        </authorList>
    </citation>
    <scope>NUCLEOTIDE SEQUENCE [LARGE SCALE GENOMIC DNA]</scope>
    <source>
        <strain>AV19 / DSM 6324 / JCM 9639 / NBRC 100938</strain>
    </source>
</reference>
<keyword id="KW-1185">Reference proteome</keyword>
<keyword id="KW-0687">Ribonucleoprotein</keyword>
<keyword id="KW-0689">Ribosomal protein</keyword>
<keyword id="KW-0694">RNA-binding</keyword>
<keyword id="KW-0699">rRNA-binding</keyword>
<comment type="function">
    <text evidence="1">Binds to 23S rRNA. One of the proteins that surrounds the polypeptide exit tunnel on the outside of the ribosome.</text>
</comment>
<comment type="subunit">
    <text evidence="1">Part of the 50S ribosomal subunit. Contacts protein L29.</text>
</comment>
<comment type="similarity">
    <text evidence="1">Belongs to the universal ribosomal protein uL23 family.</text>
</comment>
<organism>
    <name type="scientific">Methanopyrus kandleri (strain AV19 / DSM 6324 / JCM 9639 / NBRC 100938)</name>
    <dbReference type="NCBI Taxonomy" id="190192"/>
    <lineage>
        <taxon>Archaea</taxon>
        <taxon>Methanobacteriati</taxon>
        <taxon>Methanobacteriota</taxon>
        <taxon>Methanomada group</taxon>
        <taxon>Methanopyri</taxon>
        <taxon>Methanopyrales</taxon>
        <taxon>Methanopyraceae</taxon>
        <taxon>Methanopyrus</taxon>
    </lineage>
</organism>
<sequence>MAKRYGPKIEDPHDVLLYPVATEKAMRLMEAENKLTFIVRRDANKPLIKKAVEELFDVEVEKVNTLITPTGEKKAYVKLKPEYRAEDVAVDLGIL</sequence>
<evidence type="ECO:0000255" key="1">
    <source>
        <dbReference type="HAMAP-Rule" id="MF_01369"/>
    </source>
</evidence>
<evidence type="ECO:0000305" key="2"/>
<name>RL23_METKA</name>
<accession>Q8TY92</accession>
<gene>
    <name evidence="1" type="primary">rpl23</name>
    <name type="ordered locus">MK0413</name>
</gene>
<dbReference type="EMBL" id="AE009439">
    <property type="protein sequence ID" value="AAM01628.1"/>
    <property type="molecule type" value="Genomic_DNA"/>
</dbReference>
<dbReference type="RefSeq" id="WP_011018783.1">
    <property type="nucleotide sequence ID" value="NC_003551.1"/>
</dbReference>
<dbReference type="SMR" id="Q8TY92"/>
<dbReference type="FunCoup" id="Q8TY92">
    <property type="interactions" value="145"/>
</dbReference>
<dbReference type="STRING" id="190192.MK0413"/>
<dbReference type="PaxDb" id="190192-MK0413"/>
<dbReference type="EnsemblBacteria" id="AAM01628">
    <property type="protein sequence ID" value="AAM01628"/>
    <property type="gene ID" value="MK0413"/>
</dbReference>
<dbReference type="GeneID" id="1477716"/>
<dbReference type="KEGG" id="mka:MK0413"/>
<dbReference type="PATRIC" id="fig|190192.8.peg.442"/>
<dbReference type="HOGENOM" id="CLU_037562_4_2_2"/>
<dbReference type="InParanoid" id="Q8TY92"/>
<dbReference type="OrthoDB" id="7751at2157"/>
<dbReference type="Proteomes" id="UP000001826">
    <property type="component" value="Chromosome"/>
</dbReference>
<dbReference type="GO" id="GO:1990904">
    <property type="term" value="C:ribonucleoprotein complex"/>
    <property type="evidence" value="ECO:0007669"/>
    <property type="project" value="UniProtKB-KW"/>
</dbReference>
<dbReference type="GO" id="GO:0005840">
    <property type="term" value="C:ribosome"/>
    <property type="evidence" value="ECO:0007669"/>
    <property type="project" value="UniProtKB-KW"/>
</dbReference>
<dbReference type="GO" id="GO:0019843">
    <property type="term" value="F:rRNA binding"/>
    <property type="evidence" value="ECO:0007669"/>
    <property type="project" value="UniProtKB-UniRule"/>
</dbReference>
<dbReference type="GO" id="GO:0003735">
    <property type="term" value="F:structural constituent of ribosome"/>
    <property type="evidence" value="ECO:0007669"/>
    <property type="project" value="InterPro"/>
</dbReference>
<dbReference type="GO" id="GO:0006412">
    <property type="term" value="P:translation"/>
    <property type="evidence" value="ECO:0007669"/>
    <property type="project" value="UniProtKB-UniRule"/>
</dbReference>
<dbReference type="FunFam" id="3.30.70.330:FF:000532">
    <property type="entry name" value="50S ribosomal protein L23"/>
    <property type="match status" value="1"/>
</dbReference>
<dbReference type="Gene3D" id="3.30.70.330">
    <property type="match status" value="1"/>
</dbReference>
<dbReference type="HAMAP" id="MF_01369_A">
    <property type="entry name" value="Ribosomal_uL23_A"/>
    <property type="match status" value="1"/>
</dbReference>
<dbReference type="HAMAP" id="MF_01369_B">
    <property type="entry name" value="Ribosomal_uL23_B"/>
    <property type="match status" value="1"/>
</dbReference>
<dbReference type="InterPro" id="IPR012677">
    <property type="entry name" value="Nucleotide-bd_a/b_plait_sf"/>
</dbReference>
<dbReference type="InterPro" id="IPR019985">
    <property type="entry name" value="Ribosomal_uL23"/>
</dbReference>
<dbReference type="InterPro" id="IPR013025">
    <property type="entry name" value="Ribosomal_uL23-like"/>
</dbReference>
<dbReference type="InterPro" id="IPR012678">
    <property type="entry name" value="Ribosomal_uL23/eL15/eS24_sf"/>
</dbReference>
<dbReference type="InterPro" id="IPR001014">
    <property type="entry name" value="Ribosomal_uL23_CS"/>
</dbReference>
<dbReference type="NCBIfam" id="NF011118">
    <property type="entry name" value="PRK14548.1"/>
    <property type="match status" value="1"/>
</dbReference>
<dbReference type="NCBIfam" id="TIGR03636">
    <property type="entry name" value="uL23_arch"/>
    <property type="match status" value="1"/>
</dbReference>
<dbReference type="PANTHER" id="PTHR11620">
    <property type="entry name" value="60S RIBOSOMAL PROTEIN L23A"/>
    <property type="match status" value="1"/>
</dbReference>
<dbReference type="Pfam" id="PF00276">
    <property type="entry name" value="Ribosomal_L23"/>
    <property type="match status" value="1"/>
</dbReference>
<dbReference type="SUPFAM" id="SSF54189">
    <property type="entry name" value="Ribosomal proteins S24e, L23 and L15e"/>
    <property type="match status" value="1"/>
</dbReference>
<dbReference type="PROSITE" id="PS00050">
    <property type="entry name" value="RIBOSOMAL_L23"/>
    <property type="match status" value="1"/>
</dbReference>
<proteinExistence type="inferred from homology"/>
<protein>
    <recommendedName>
        <fullName evidence="1">Large ribosomal subunit protein uL23</fullName>
    </recommendedName>
    <alternativeName>
        <fullName evidence="2">50S ribosomal protein L23</fullName>
    </alternativeName>
</protein>
<feature type="chain" id="PRO_0000272943" description="Large ribosomal subunit protein uL23">
    <location>
        <begin position="1"/>
        <end position="95"/>
    </location>
</feature>